<comment type="function">
    <text evidence="9 10 11 12 14 17 18">Non-reducing polyketide synthase; part of the gene cluster that mediates the biosynthesis of aurofusarin, a red mycelium pigment which is acting as a mycotoxin (PubMed:15780665, PubMed:15809006, PubMed:15811992, PubMed:16278459, PubMed:16879655). The first step is performed by the polyketide synthase which condenses one acetyl-CoA and 6 malonyl-CoA units to form the first intermediate, the cyclic heptaketide and yellow pigment YWA1 (PubMed:21296881, PubMed:23557488). The C2 hydroxyl group in the pyrone ring of YWA1 is probably formed during ring closure by an aldol-type cyclization reaction (PubMed:21296881). The dehydratase aurZ then acts as the first tailoring enzyme in the aurofusarin biosynthetic pathway by converting YWA1 to nor-rubrofusarin (PubMed:21296881, PubMed:23557488). Nor-rubrofusarin is then methylated to rubrofusarin by the O-methyltransferase aurJ (PubMed:21296881, PubMed:23557488). Rubrofusarin is then transported across the plasma membrane by the rubrofusarin-specific pump aurT for further enzymatic processing by the extracellular complex composed of GIP1, aurF, aurO and aurS to yield aurofusarin (PubMed:21296881).</text>
</comment>
<comment type="catalytic activity">
    <reaction evidence="18">
        <text>6 malonyl-CoA + acetyl-CoA + 6 H(+) = naphtopyrone YWA1 + 6 CO2 + 7 CoA + H2O</text>
        <dbReference type="Rhea" id="RHEA:62652"/>
        <dbReference type="ChEBI" id="CHEBI:15377"/>
        <dbReference type="ChEBI" id="CHEBI:15378"/>
        <dbReference type="ChEBI" id="CHEBI:16526"/>
        <dbReference type="ChEBI" id="CHEBI:57287"/>
        <dbReference type="ChEBI" id="CHEBI:57288"/>
        <dbReference type="ChEBI" id="CHEBI:57384"/>
        <dbReference type="ChEBI" id="CHEBI:133763"/>
    </reaction>
    <physiologicalReaction direction="left-to-right" evidence="18">
        <dbReference type="Rhea" id="RHEA:62653"/>
    </physiologicalReaction>
</comment>
<comment type="pathway">
    <text evidence="10 14 18">Pigment biosynthesis.</text>
</comment>
<comment type="induction">
    <text evidence="13 14 15 16">Expression is regulated by the aurofusarin biosynthesis cluster-specific transcription factor aurR1/GIP2 (PubMed:16461721, PubMed:16879655). Expression is negatively regulated by the MAPK-mediated osmotic stress-signaling pathway (PubMed:17897620). Expression is also regulated by the CID1 cyclin C-like protein (PubMed:19909822).</text>
</comment>
<comment type="domain">
    <text evidence="2">Multidomain protein; including a starter unit:ACP transacylase (SAT) that selects the starter unit; a ketosynthase (KS) that catalyzes repeated decarboxylative condensation to elongate the polyketide backbone; a malonyl-CoA:ACP transacylase (MAT) that selects and transfers the extender unit malonyl-CoA; a product template (PT) domain that controls the immediate cyclization regioselectivity of the reactive polyketide backbone; and an acyl-carrier protein (ACP) that serves as the tether of the growing and completed polyketide via its phosphopantetheinyl arm (By similarity).</text>
</comment>
<comment type="domain">
    <text evidence="1">The C-terminal region is involved in Claisen-type cyclization of the second ring of naphthopyrone.</text>
</comment>
<comment type="disruption phenotype">
    <text evidence="9 10 11 12">Leads to a albinos phanotype and affects conidiation (PubMed:15780665, PubMed:15809006, PubMed:15811992, PubMed:16278459).</text>
</comment>
<feature type="chain" id="PRO_0000441086" description="Non-reducing polyketide synthase PKS12">
    <location>
        <begin position="1"/>
        <end position="2067"/>
    </location>
</feature>
<feature type="domain" description="Ketosynthase family 3 (KS3)" evidence="5">
    <location>
        <begin position="373"/>
        <end position="808"/>
    </location>
</feature>
<feature type="domain" description="PKS/mFAS DH" evidence="6">
    <location>
        <begin position="1297"/>
        <end position="1606"/>
    </location>
</feature>
<feature type="domain" description="Carrier" evidence="4">
    <location>
        <begin position="1660"/>
        <end position="1738"/>
    </location>
</feature>
<feature type="region of interest" description="N-terminal acylcarrier protein transacylase (SAT) domain" evidence="3">
    <location>
        <begin position="4"/>
        <end position="241"/>
    </location>
</feature>
<feature type="region of interest" description="Disordered" evidence="8">
    <location>
        <begin position="350"/>
        <end position="373"/>
    </location>
</feature>
<feature type="region of interest" description="Malonyl-CoA:ACP transacylase (MAT) domain" evidence="3">
    <location>
        <begin position="912"/>
        <end position="1199"/>
    </location>
</feature>
<feature type="region of interest" description="N-terminal hotdog fold" evidence="6">
    <location>
        <begin position="1297"/>
        <end position="1433"/>
    </location>
</feature>
<feature type="region of interest" description="Product template (PT) domain" evidence="3">
    <location>
        <begin position="1329"/>
        <end position="1604"/>
    </location>
</feature>
<feature type="region of interest" description="C-terminal hotdog fold" evidence="6">
    <location>
        <begin position="1460"/>
        <end position="1606"/>
    </location>
</feature>
<feature type="region of interest" description="Disordered" evidence="8">
    <location>
        <begin position="1619"/>
        <end position="1648"/>
    </location>
</feature>
<feature type="region of interest" description="Disordered" evidence="8">
    <location>
        <begin position="1742"/>
        <end position="1779"/>
    </location>
</feature>
<feature type="region of interest" description="Claisen cyclase domain" evidence="1">
    <location>
        <begin position="1781"/>
        <end position="2065"/>
    </location>
</feature>
<feature type="compositionally biased region" description="Polar residues" evidence="8">
    <location>
        <begin position="356"/>
        <end position="373"/>
    </location>
</feature>
<feature type="compositionally biased region" description="Low complexity" evidence="8">
    <location>
        <begin position="1743"/>
        <end position="1754"/>
    </location>
</feature>
<feature type="active site" description="For beta-ketoacyl synthase activity" evidence="5">
    <location>
        <position position="545"/>
    </location>
</feature>
<feature type="active site" description="For beta-ketoacyl synthase activity" evidence="5">
    <location>
        <position position="680"/>
    </location>
</feature>
<feature type="active site" description="For beta-ketoacyl synthase activity" evidence="5">
    <location>
        <position position="725"/>
    </location>
</feature>
<feature type="active site" description="For acyl/malonyl transferase activity" evidence="7">
    <location>
        <position position="1001"/>
    </location>
</feature>
<feature type="active site" description="Proton acceptor; for dehydratase activity" evidence="6">
    <location>
        <position position="1329"/>
    </location>
</feature>
<feature type="active site" description="Proton donor; for dehydratase activity" evidence="6">
    <location>
        <position position="1519"/>
    </location>
</feature>
<feature type="active site" description="For Claisen cyclase activity" evidence="1">
    <location>
        <position position="1875"/>
    </location>
</feature>
<feature type="modified residue" description="O-(pantetheine 4'-phosphoryl)serine" evidence="4">
    <location>
        <position position="1698"/>
    </location>
</feature>
<name>PKS12_GIBZE</name>
<organism>
    <name type="scientific">Gibberella zeae (strain ATCC MYA-4620 / CBS 123657 / FGSC 9075 / NRRL 31084 / PH-1)</name>
    <name type="common">Wheat head blight fungus</name>
    <name type="synonym">Fusarium graminearum</name>
    <dbReference type="NCBI Taxonomy" id="229533"/>
    <lineage>
        <taxon>Eukaryota</taxon>
        <taxon>Fungi</taxon>
        <taxon>Dikarya</taxon>
        <taxon>Ascomycota</taxon>
        <taxon>Pezizomycotina</taxon>
        <taxon>Sordariomycetes</taxon>
        <taxon>Hypocreomycetidae</taxon>
        <taxon>Hypocreales</taxon>
        <taxon>Nectriaceae</taxon>
        <taxon>Fusarium</taxon>
    </lineage>
</organism>
<evidence type="ECO:0000250" key="1">
    <source>
        <dbReference type="UniProtKB" id="Q03149"/>
    </source>
</evidence>
<evidence type="ECO:0000250" key="2">
    <source>
        <dbReference type="UniProtKB" id="Q5B0D0"/>
    </source>
</evidence>
<evidence type="ECO:0000255" key="3"/>
<evidence type="ECO:0000255" key="4">
    <source>
        <dbReference type="PROSITE-ProRule" id="PRU00258"/>
    </source>
</evidence>
<evidence type="ECO:0000255" key="5">
    <source>
        <dbReference type="PROSITE-ProRule" id="PRU01348"/>
    </source>
</evidence>
<evidence type="ECO:0000255" key="6">
    <source>
        <dbReference type="PROSITE-ProRule" id="PRU01363"/>
    </source>
</evidence>
<evidence type="ECO:0000255" key="7">
    <source>
        <dbReference type="PROSITE-ProRule" id="PRU10022"/>
    </source>
</evidence>
<evidence type="ECO:0000256" key="8">
    <source>
        <dbReference type="SAM" id="MobiDB-lite"/>
    </source>
</evidence>
<evidence type="ECO:0000269" key="9">
    <source>
    </source>
</evidence>
<evidence type="ECO:0000269" key="10">
    <source>
    </source>
</evidence>
<evidence type="ECO:0000269" key="11">
    <source>
    </source>
</evidence>
<evidence type="ECO:0000269" key="12">
    <source>
    </source>
</evidence>
<evidence type="ECO:0000269" key="13">
    <source>
    </source>
</evidence>
<evidence type="ECO:0000269" key="14">
    <source>
    </source>
</evidence>
<evidence type="ECO:0000269" key="15">
    <source>
    </source>
</evidence>
<evidence type="ECO:0000269" key="16">
    <source>
    </source>
</evidence>
<evidence type="ECO:0000269" key="17">
    <source>
    </source>
</evidence>
<evidence type="ECO:0000269" key="18">
    <source>
    </source>
</evidence>
<evidence type="ECO:0000303" key="19">
    <source>
    </source>
</evidence>
<evidence type="ECO:0000303" key="20">
    <source>
    </source>
</evidence>
<dbReference type="EC" id="2.3.1.-" evidence="18"/>
<dbReference type="EMBL" id="HG970332">
    <property type="protein sequence ID" value="CEF74601.1"/>
    <property type="molecule type" value="Genomic_DNA"/>
</dbReference>
<dbReference type="RefSeq" id="XP_011318233.1">
    <property type="nucleotide sequence ID" value="XM_011319931.1"/>
</dbReference>
<dbReference type="SMR" id="I1RF58"/>
<dbReference type="STRING" id="229533.I1RF58"/>
<dbReference type="ESTHER" id="gibze-q66sy0">
    <property type="family name" value="Thioesterase"/>
</dbReference>
<dbReference type="KEGG" id="fgr:FGSG_02324"/>
<dbReference type="VEuPathDB" id="FungiDB:FGRAMPH1_01G05593"/>
<dbReference type="eggNOG" id="KOG1202">
    <property type="taxonomic scope" value="Eukaryota"/>
</dbReference>
<dbReference type="HOGENOM" id="CLU_000022_6_0_1"/>
<dbReference type="InParanoid" id="I1RF58"/>
<dbReference type="OrthoDB" id="81930at110618"/>
<dbReference type="PHI-base" id="PHI:720"/>
<dbReference type="Proteomes" id="UP000070720">
    <property type="component" value="Chromosome 1"/>
</dbReference>
<dbReference type="GO" id="GO:0004315">
    <property type="term" value="F:3-oxoacyl-[acyl-carrier-protein] synthase activity"/>
    <property type="evidence" value="ECO:0007669"/>
    <property type="project" value="InterPro"/>
</dbReference>
<dbReference type="GO" id="GO:0004312">
    <property type="term" value="F:fatty acid synthase activity"/>
    <property type="evidence" value="ECO:0007669"/>
    <property type="project" value="TreeGrafter"/>
</dbReference>
<dbReference type="GO" id="GO:0006633">
    <property type="term" value="P:fatty acid biosynthetic process"/>
    <property type="evidence" value="ECO:0007669"/>
    <property type="project" value="InterPro"/>
</dbReference>
<dbReference type="GO" id="GO:0030639">
    <property type="term" value="P:polyketide biosynthetic process"/>
    <property type="evidence" value="ECO:0007669"/>
    <property type="project" value="UniProtKB-ARBA"/>
</dbReference>
<dbReference type="GO" id="GO:0009403">
    <property type="term" value="P:toxin biosynthetic process"/>
    <property type="evidence" value="ECO:0007669"/>
    <property type="project" value="UniProtKB-ARBA"/>
</dbReference>
<dbReference type="CDD" id="cd00833">
    <property type="entry name" value="PKS"/>
    <property type="match status" value="1"/>
</dbReference>
<dbReference type="FunFam" id="3.40.366.10:FF:000002">
    <property type="entry name" value="Probable polyketide synthase 2"/>
    <property type="match status" value="1"/>
</dbReference>
<dbReference type="FunFam" id="3.10.129.110:FF:000001">
    <property type="entry name" value="Sterigmatocystin biosynthesis polyketide synthase"/>
    <property type="match status" value="1"/>
</dbReference>
<dbReference type="FunFam" id="3.40.47.10:FF:000031">
    <property type="entry name" value="Sterigmatocystin biosynthesis polyketide synthase"/>
    <property type="match status" value="1"/>
</dbReference>
<dbReference type="Gene3D" id="3.30.70.3290">
    <property type="match status" value="1"/>
</dbReference>
<dbReference type="Gene3D" id="3.40.47.10">
    <property type="match status" value="1"/>
</dbReference>
<dbReference type="Gene3D" id="1.10.1200.10">
    <property type="entry name" value="ACP-like"/>
    <property type="match status" value="1"/>
</dbReference>
<dbReference type="Gene3D" id="3.40.50.1820">
    <property type="entry name" value="alpha/beta hydrolase"/>
    <property type="match status" value="1"/>
</dbReference>
<dbReference type="Gene3D" id="3.40.366.10">
    <property type="entry name" value="Malonyl-Coenzyme A Acyl Carrier Protein, domain 2"/>
    <property type="match status" value="2"/>
</dbReference>
<dbReference type="Gene3D" id="3.10.129.110">
    <property type="entry name" value="Polyketide synthase dehydratase"/>
    <property type="match status" value="1"/>
</dbReference>
<dbReference type="InterPro" id="IPR029058">
    <property type="entry name" value="AB_hydrolase_fold"/>
</dbReference>
<dbReference type="InterPro" id="IPR001227">
    <property type="entry name" value="Ac_transferase_dom_sf"/>
</dbReference>
<dbReference type="InterPro" id="IPR036736">
    <property type="entry name" value="ACP-like_sf"/>
</dbReference>
<dbReference type="InterPro" id="IPR014043">
    <property type="entry name" value="Acyl_transferase_dom"/>
</dbReference>
<dbReference type="InterPro" id="IPR016035">
    <property type="entry name" value="Acyl_Trfase/lysoPLipase"/>
</dbReference>
<dbReference type="InterPro" id="IPR018201">
    <property type="entry name" value="Ketoacyl_synth_AS"/>
</dbReference>
<dbReference type="InterPro" id="IPR014031">
    <property type="entry name" value="Ketoacyl_synth_C"/>
</dbReference>
<dbReference type="InterPro" id="IPR014030">
    <property type="entry name" value="Ketoacyl_synth_N"/>
</dbReference>
<dbReference type="InterPro" id="IPR016036">
    <property type="entry name" value="Malonyl_transacylase_ACP-bd"/>
</dbReference>
<dbReference type="InterPro" id="IPR020841">
    <property type="entry name" value="PKS_Beta-ketoAc_synthase_dom"/>
</dbReference>
<dbReference type="InterPro" id="IPR042104">
    <property type="entry name" value="PKS_dehydratase_sf"/>
</dbReference>
<dbReference type="InterPro" id="IPR049551">
    <property type="entry name" value="PKS_DH_C"/>
</dbReference>
<dbReference type="InterPro" id="IPR049900">
    <property type="entry name" value="PKS_mFAS_DH"/>
</dbReference>
<dbReference type="InterPro" id="IPR050091">
    <property type="entry name" value="PKS_NRPS_Biosynth_Enz"/>
</dbReference>
<dbReference type="InterPro" id="IPR009081">
    <property type="entry name" value="PP-bd_ACP"/>
</dbReference>
<dbReference type="InterPro" id="IPR030918">
    <property type="entry name" value="PT_fungal_PKS"/>
</dbReference>
<dbReference type="InterPro" id="IPR032088">
    <property type="entry name" value="SAT"/>
</dbReference>
<dbReference type="InterPro" id="IPR001031">
    <property type="entry name" value="Thioesterase"/>
</dbReference>
<dbReference type="InterPro" id="IPR016039">
    <property type="entry name" value="Thiolase-like"/>
</dbReference>
<dbReference type="NCBIfam" id="TIGR04532">
    <property type="entry name" value="PT_fungal_PKS"/>
    <property type="match status" value="1"/>
</dbReference>
<dbReference type="PANTHER" id="PTHR43775:SF45">
    <property type="entry name" value="CONIDIAL PIGMENT POLYKETIDE SYNTHASE ALB1"/>
    <property type="match status" value="1"/>
</dbReference>
<dbReference type="PANTHER" id="PTHR43775">
    <property type="entry name" value="FATTY ACID SYNTHASE"/>
    <property type="match status" value="1"/>
</dbReference>
<dbReference type="Pfam" id="PF00698">
    <property type="entry name" value="Acyl_transf_1"/>
    <property type="match status" value="1"/>
</dbReference>
<dbReference type="Pfam" id="PF22621">
    <property type="entry name" value="CurL-like_PKS_C"/>
    <property type="match status" value="1"/>
</dbReference>
<dbReference type="Pfam" id="PF00109">
    <property type="entry name" value="ketoacyl-synt"/>
    <property type="match status" value="1"/>
</dbReference>
<dbReference type="Pfam" id="PF02801">
    <property type="entry name" value="Ketoacyl-synt_C"/>
    <property type="match status" value="1"/>
</dbReference>
<dbReference type="Pfam" id="PF00550">
    <property type="entry name" value="PP-binding"/>
    <property type="match status" value="1"/>
</dbReference>
<dbReference type="Pfam" id="PF14765">
    <property type="entry name" value="PS-DH"/>
    <property type="match status" value="1"/>
</dbReference>
<dbReference type="Pfam" id="PF16073">
    <property type="entry name" value="SAT"/>
    <property type="match status" value="1"/>
</dbReference>
<dbReference type="Pfam" id="PF00975">
    <property type="entry name" value="Thioesterase"/>
    <property type="match status" value="1"/>
</dbReference>
<dbReference type="SMART" id="SM00827">
    <property type="entry name" value="PKS_AT"/>
    <property type="match status" value="1"/>
</dbReference>
<dbReference type="SMART" id="SM00825">
    <property type="entry name" value="PKS_KS"/>
    <property type="match status" value="1"/>
</dbReference>
<dbReference type="SUPFAM" id="SSF47336">
    <property type="entry name" value="ACP-like"/>
    <property type="match status" value="1"/>
</dbReference>
<dbReference type="SUPFAM" id="SSF53474">
    <property type="entry name" value="alpha/beta-Hydrolases"/>
    <property type="match status" value="1"/>
</dbReference>
<dbReference type="SUPFAM" id="SSF52151">
    <property type="entry name" value="FabD/lysophospholipase-like"/>
    <property type="match status" value="2"/>
</dbReference>
<dbReference type="SUPFAM" id="SSF55048">
    <property type="entry name" value="Probable ACP-binding domain of malonyl-CoA ACP transacylase"/>
    <property type="match status" value="1"/>
</dbReference>
<dbReference type="SUPFAM" id="SSF53901">
    <property type="entry name" value="Thiolase-like"/>
    <property type="match status" value="1"/>
</dbReference>
<dbReference type="PROSITE" id="PS50075">
    <property type="entry name" value="CARRIER"/>
    <property type="match status" value="1"/>
</dbReference>
<dbReference type="PROSITE" id="PS00606">
    <property type="entry name" value="KS3_1"/>
    <property type="match status" value="1"/>
</dbReference>
<dbReference type="PROSITE" id="PS52004">
    <property type="entry name" value="KS3_2"/>
    <property type="match status" value="1"/>
</dbReference>
<dbReference type="PROSITE" id="PS52019">
    <property type="entry name" value="PKS_MFAS_DH"/>
    <property type="match status" value="1"/>
</dbReference>
<keyword id="KW-0511">Multifunctional enzyme</keyword>
<keyword id="KW-0596">Phosphopantetheine</keyword>
<keyword id="KW-0597">Phosphoprotein</keyword>
<keyword id="KW-1185">Reference proteome</keyword>
<keyword id="KW-0808">Transferase</keyword>
<proteinExistence type="evidence at protein level"/>
<sequence>MEVFVFGDQSTRFAPPLKDLLLKGNSPYLTHFVKQVHALLRREISSLPAVQQKLFPNFADIQELVSKSDWGSGNPALTSALACFYHLCSFIHFYDGQGRTFPSENSRIIGLCVGSLAAAAVSCSTSLSELVSAGVDAVRVALHVGLRVWRTTSLFDVPDRPSATWSIIVPEAVLPRESAQDRLDSFIIEMGLARSSVPYISSVAHHNMTISGPPSVLEKFIHSISTSPKDSLPVPIYAPYHASHLYSMDDVDEVLSLSAPSFASESIIPLISSSSGDELQPLKYADLLRCCVSDMLIQPLDLTKVSQAVAQLLEVSSSTRAIIKPIATSVSNSLVSALEPTLAERCAVDNSMGPKASTSHSSAETQTESSSKNSKIAIVAMSGRFPDAADLGEFWDLLYKGRDVHRQIPEDRFNAELHYDATGRRKNTSKVMNGCFIKEPGLFDARFFNMSPKEAEQSDPGQRMALETAYEALEMAGIVPDRTPSTQRDRVGVFYGMTSDDWREVNSGQNVDTYFIPGGNRAFTPGRLNYFFKFSGPSASVDTACSSSLAALHLACNSLWRNDCDTAIAGGTNVMTNPDNFAGLDRGHFLSRTGNCNTFDDGADGYCRADGVGTIILKRLEDAEADNDPILGVILGAYTNHSAEAVSITRPHAGAQEYIFSKLLRESGTDPYNVSYIEMHGTGTQAGDATEMTSVLKTFAPTSGFGGRLPHQNLHLGSVKANVGHGESASGIIALIKTLLMMEKNMIPPHCGIKTKINHHFPTDLTQRNVHIAKVPTSWTRSGQANPRIAFVNNFSAAGGNSAVLLQDAPRPSVVSDVTDPRSSHVVTMSARSADSLRKNLANLKELVEGQGDSEVDFLSKLSYTTTARRMHHQFRASVTAQTREQLLKGLDSAIERQDVKRIPAAAPSVGFVFSGQGAQYRGMGKEYFTSFTAFRSEIMSYDSIAQAQGFPSILPLIRGEVEADSLSPVEIQLGLTCLQMALAKLWKSFGVEPGFVLGHSLGHYAALHVAGVLSANDTIYLTGIRAQLLVDKCQAGTHSMLAVRASLLQIQQFLDANIHEVACVNGPREVVISGRVADIDQLVGLLSADNIKATRVKVPFAFHSAQVDPILSDLDTAASRVTFHSPQIPVLCALDSSVISPGNHGVIGPLHLQRHCRETVNFEGALHAAEREKIINKTSTLWIEIGPHVVCSTFLKSSLGPSTPTIASLRRNDDCWKVLADGLSSLYSSGLTIDWNEYHRDFKASHQVLRLPCYSWEHKNYWIQYKYDWSLTKGDPPIAPNSSVEAVSALSTPSVQKILQETSLDQVLTIVAETDLASPLLSEVAQGHRVNGVKVCTSSVYADVGLTLGKYILDNYRTDLEGYAVDVHGIEVHKPLLLKEDMNGTPQATPFRIEVRYPIQSTTALMSISTTGPNGQHIKHANCELRLEHPSQWEAEWDRQAYLINRSVNYLLQRSAQGLDSMLATGMVYKVFSSLVDYADGYKGLQEVVLHSQELEGTAKVRFQTPSGGFVCNPMWIDSCGQTTGFMMNCHQTTPNDYVYVNHGWKSMRLAKAFREDGTYRTYIRMRPIDSTKFAGDLYILDEDDTVVGVYGDITFQGLPRRVLNTVLPSANAVPVDAPMGRRDVPPSRMDVPPVRSGEGPPTSAPTQQAIALPFAADTSMDSRLRPLLRILSEEIGLGLDVLSDDELDFADHGVDSLLSLTITGRMREELGLDVESTAFMNCPTLGSFKLFLGLVDQDNKSSSGSDGSGRSSPAPGIESGATTPPMSEEDQDKIVSSHSLHQFQASSTLLQGSPSKARSTLFLLPDGSGSATSYASLPPISPDGDVAVYGLNCPWLKDASYLVEFGLKGLTELYVNEILRRKPQGPYNLGGWSAGGICAYEAALILTRAGHQVDRLILIDSPNPVGLEKLPPRLYDFLNSQNVFGSDNPHSTAGTSVKAPEWLLAHFLAFIDALDAYVAVPWDSGLVGLASPLPAPPQTYMLWAEDGVCKDSDSARPEYRDDDPREMRWLLENRTNFGPNGWEALLGGKEGLFMDRIAEANHFSMLKRGRNAEYVSAFLARALDN</sequence>
<accession>I1RF58</accession>
<accession>A0A098D9G9</accession>
<gene>
    <name evidence="19" type="primary">PKS12</name>
    <name evidence="20" type="synonym">AUR1</name>
    <name type="ORF">FG12040</name>
    <name type="ORF">FGRAMPH1_01T05593</name>
</gene>
<protein>
    <recommendedName>
        <fullName evidence="19">Non-reducing polyketide synthase PKS12</fullName>
        <ecNumber evidence="18">2.3.1.-</ecNumber>
    </recommendedName>
    <alternativeName>
        <fullName evidence="19">Aurofusarin biosynthesis cluster protein PKS12</fullName>
    </alternativeName>
</protein>
<reference key="1">
    <citation type="journal article" date="2007" name="Science">
        <title>The Fusarium graminearum genome reveals a link between localized polymorphism and pathogen specialization.</title>
        <authorList>
            <person name="Cuomo C.A."/>
            <person name="Gueldener U."/>
            <person name="Xu J.-R."/>
            <person name="Trail F."/>
            <person name="Turgeon B.G."/>
            <person name="Di Pietro A."/>
            <person name="Walton J.D."/>
            <person name="Ma L.-J."/>
            <person name="Baker S.E."/>
            <person name="Rep M."/>
            <person name="Adam G."/>
            <person name="Antoniw J."/>
            <person name="Baldwin T."/>
            <person name="Calvo S.E."/>
            <person name="Chang Y.-L."/>
            <person name="DeCaprio D."/>
            <person name="Gale L.R."/>
            <person name="Gnerre S."/>
            <person name="Goswami R.S."/>
            <person name="Hammond-Kosack K."/>
            <person name="Harris L.J."/>
            <person name="Hilburn K."/>
            <person name="Kennell J.C."/>
            <person name="Kroken S."/>
            <person name="Magnuson J.K."/>
            <person name="Mannhaupt G."/>
            <person name="Mauceli E.W."/>
            <person name="Mewes H.-W."/>
            <person name="Mitterbauer R."/>
            <person name="Muehlbauer G."/>
            <person name="Muensterkoetter M."/>
            <person name="Nelson D."/>
            <person name="O'Donnell K."/>
            <person name="Ouellet T."/>
            <person name="Qi W."/>
            <person name="Quesneville H."/>
            <person name="Roncero M.I.G."/>
            <person name="Seong K.-Y."/>
            <person name="Tetko I.V."/>
            <person name="Urban M."/>
            <person name="Waalwijk C."/>
            <person name="Ward T.J."/>
            <person name="Yao J."/>
            <person name="Birren B.W."/>
            <person name="Kistler H.C."/>
        </authorList>
    </citation>
    <scope>NUCLEOTIDE SEQUENCE [LARGE SCALE GENOMIC DNA]</scope>
    <source>
        <strain>ATCC MYA-4620 / CBS 123657 / FGSC 9075 / NRRL 31084 / PH-1</strain>
    </source>
</reference>
<reference key="2">
    <citation type="journal article" date="2010" name="Nature">
        <title>Comparative genomics reveals mobile pathogenicity chromosomes in Fusarium.</title>
        <authorList>
            <person name="Ma L.-J."/>
            <person name="van der Does H.C."/>
            <person name="Borkovich K.A."/>
            <person name="Coleman J.J."/>
            <person name="Daboussi M.-J."/>
            <person name="Di Pietro A."/>
            <person name="Dufresne M."/>
            <person name="Freitag M."/>
            <person name="Grabherr M."/>
            <person name="Henrissat B."/>
            <person name="Houterman P.M."/>
            <person name="Kang S."/>
            <person name="Shim W.-B."/>
            <person name="Woloshuk C."/>
            <person name="Xie X."/>
            <person name="Xu J.-R."/>
            <person name="Antoniw J."/>
            <person name="Baker S.E."/>
            <person name="Bluhm B.H."/>
            <person name="Breakspear A."/>
            <person name="Brown D.W."/>
            <person name="Butchko R.A.E."/>
            <person name="Chapman S."/>
            <person name="Coulson R."/>
            <person name="Coutinho P.M."/>
            <person name="Danchin E.G.J."/>
            <person name="Diener A."/>
            <person name="Gale L.R."/>
            <person name="Gardiner D.M."/>
            <person name="Goff S."/>
            <person name="Hammond-Kosack K.E."/>
            <person name="Hilburn K."/>
            <person name="Hua-Van A."/>
            <person name="Jonkers W."/>
            <person name="Kazan K."/>
            <person name="Kodira C.D."/>
            <person name="Koehrsen M."/>
            <person name="Kumar L."/>
            <person name="Lee Y.-H."/>
            <person name="Li L."/>
            <person name="Manners J.M."/>
            <person name="Miranda-Saavedra D."/>
            <person name="Mukherjee M."/>
            <person name="Park G."/>
            <person name="Park J."/>
            <person name="Park S.-Y."/>
            <person name="Proctor R.H."/>
            <person name="Regev A."/>
            <person name="Ruiz-Roldan M.C."/>
            <person name="Sain D."/>
            <person name="Sakthikumar S."/>
            <person name="Sykes S."/>
            <person name="Schwartz D.C."/>
            <person name="Turgeon B.G."/>
            <person name="Wapinski I."/>
            <person name="Yoder O."/>
            <person name="Young S."/>
            <person name="Zeng Q."/>
            <person name="Zhou S."/>
            <person name="Galagan J."/>
            <person name="Cuomo C.A."/>
            <person name="Kistler H.C."/>
            <person name="Rep M."/>
        </authorList>
    </citation>
    <scope>GENOME REANNOTATION</scope>
    <source>
        <strain>ATCC MYA-4620 / CBS 123657 / FGSC 9075 / NRRL 31084 / PH-1</strain>
    </source>
</reference>
<reference key="3">
    <citation type="journal article" date="2015" name="BMC Genomics">
        <title>The completed genome sequence of the pathogenic ascomycete fungus Fusarium graminearum.</title>
        <authorList>
            <person name="King R."/>
            <person name="Urban M."/>
            <person name="Hammond-Kosack M.C.U."/>
            <person name="Hassani-Pak K."/>
            <person name="Hammond-Kosack K.E."/>
        </authorList>
    </citation>
    <scope>NUCLEOTIDE SEQUENCE [LARGE SCALE GENOMIC DNA]</scope>
    <source>
        <strain>ATCC MYA-4620 / CBS 123657 / FGSC 9075 / NRRL 31084 / PH-1</strain>
    </source>
</reference>
<reference key="4">
    <citation type="journal article" date="2005" name="Appl. Environ. Microbiol.">
        <title>Putative polyketide synthase and laccase genes for biosynthesis of aurofusarin in Gibberella zeae.</title>
        <authorList>
            <person name="Kim J.E."/>
            <person name="Han K.H."/>
            <person name="Jin J."/>
            <person name="Kim H."/>
            <person name="Kim J.C."/>
            <person name="Yun S.H."/>
            <person name="Lee Y.W."/>
        </authorList>
    </citation>
    <scope>FUNCTION</scope>
    <scope>DISRUPTION PHENOTYPE</scope>
</reference>
<reference key="5">
    <citation type="journal article" date="2005" name="Eukaryot. Cell">
        <title>Functional analysis of the polyketide synthase genes in the filamentous fungus Gibberella zeae (anamorph Fusarium graminearum).</title>
        <authorList>
            <person name="Gaffoor I."/>
            <person name="Brown D.W."/>
            <person name="Plattner R."/>
            <person name="Proctor R.H."/>
            <person name="Qi W."/>
            <person name="Trail F."/>
        </authorList>
    </citation>
    <scope>FUNCTION</scope>
    <scope>DISRUPTION PHENOTYPE</scope>
</reference>
<reference key="6">
    <citation type="journal article" date="2005" name="Fungal Genet. Biol.">
        <title>Identification of a gene cluster responsible for the biosynthesis of aurofusarin in the Fusarium graminearum species complex.</title>
        <authorList>
            <person name="Malz S."/>
            <person name="Grell M.N."/>
            <person name="Thrane C."/>
            <person name="Maier F.J."/>
            <person name="Rosager P."/>
            <person name="Felk A."/>
            <person name="Albertsen K.S."/>
            <person name="Salomon S."/>
            <person name="Bohn L."/>
            <person name="Schaefer W."/>
            <person name="Giese H."/>
        </authorList>
    </citation>
    <scope>FUNCTION</scope>
    <scope>DISRUPTION PHENOTYPE</scope>
    <scope>PATHWAY</scope>
</reference>
<reference key="7">
    <citation type="journal article" date="2005" name="FEMS Yeast Res.">
        <title>Development of a highly efficient gene targeting system for Fusarium graminearum using the disruption of a polyketide synthase gene as a visible marker.</title>
        <authorList>
            <person name="Maier F.J."/>
            <person name="Malz S."/>
            <person name="Losch A.P."/>
            <person name="Lacour T."/>
            <person name="Schafer W."/>
        </authorList>
    </citation>
    <scope>FUNCTION</scope>
    <scope>DISRUPTION PHENOTYPE</scope>
</reference>
<reference key="8">
    <citation type="journal article" date="2006" name="Mol. Microbiol.">
        <title>The biosynthetic pathway for aurofusarin in Fusarium graminearum reveals a close link between the naphthoquinones and naphthopyrones.</title>
        <authorList>
            <person name="Frandsen R.J."/>
            <person name="Nielsen N.J."/>
            <person name="Maolanon N."/>
            <person name="Soerensen J.C."/>
            <person name="Olsson S."/>
            <person name="Nielsen J."/>
            <person name="Giese H."/>
        </authorList>
    </citation>
    <scope>FUNCTION</scope>
    <scope>INDUCTION</scope>
    <scope>PATHWAY</scope>
</reference>
<reference key="9">
    <citation type="journal article" date="2006" name="Appl. Environ. Microbiol.">
        <title>GIP2, a putative transcription factor that regulates the aurofusarin biosynthetic gene cluster in Gibberella zeae.</title>
        <authorList>
            <person name="Kim J.E."/>
            <person name="Jin J."/>
            <person name="Kim H."/>
            <person name="Kim J.C."/>
            <person name="Yun S.H."/>
            <person name="Lee Y.W."/>
        </authorList>
    </citation>
    <scope>INDUCTION</scope>
</reference>
<reference key="10">
    <citation type="journal article" date="2007" name="Biochem. Biophys. Res. Commun.">
        <title>Involvement of the osmosensor histidine kinase and osmotic stress-activated protein kinases in the regulation of secondary metabolism in Fusarium graminearum.</title>
        <authorList>
            <person name="Ochiai N."/>
            <person name="Tokai T."/>
            <person name="Nishiuchi T."/>
            <person name="Takahashi-Ando N."/>
            <person name="Fujimura M."/>
            <person name="Kimura M."/>
        </authorList>
    </citation>
    <scope>INDUCTION</scope>
</reference>
<reference key="11">
    <citation type="journal article" date="2010" name="Fungal Genet. Biol.">
        <title>The CID1 cyclin C-like gene is important for plant infection in Fusarium graminearum.</title>
        <authorList>
            <person name="Zhou X."/>
            <person name="Heyer C."/>
            <person name="Choi Y.E."/>
            <person name="Mehrabi R."/>
            <person name="Xu J.R."/>
        </authorList>
    </citation>
    <scope>INDUCTION</scope>
</reference>
<reference key="12">
    <citation type="journal article" date="2011" name="J. Biol. Chem.">
        <title>Two novel classes of enzymes are required for the biosynthesis of aurofusarin in Fusarium graminearum.</title>
        <authorList>
            <person name="Frandsen R.J."/>
            <person name="Schuett C."/>
            <person name="Lund B.W."/>
            <person name="Staerk D."/>
            <person name="Nielsen J."/>
            <person name="Olsson S."/>
            <person name="Giese H."/>
        </authorList>
    </citation>
    <scope>FUNCTION</scope>
</reference>
<reference key="13">
    <citation type="journal article" date="2013" name="Microb. Cell Fact.">
        <title>Reconstruction of the biosynthetic pathway for the core fungal polyketide scaffold rubrofusarin in Saccharomyces cerevisiae.</title>
        <authorList>
            <person name="Rugbjerg P."/>
            <person name="Naesby M."/>
            <person name="Mortensen U.H."/>
            <person name="Frandsen R.J."/>
        </authorList>
    </citation>
    <scope>FUNCTION</scope>
    <scope>CATALYTIC ACTIVITY</scope>
    <scope>PATHWAY</scope>
</reference>